<accession>Q99R60</accession>
<gene>
    <name type="ordered locus">SAV2578</name>
</gene>
<reference key="1">
    <citation type="journal article" date="2001" name="Lancet">
        <title>Whole genome sequencing of meticillin-resistant Staphylococcus aureus.</title>
        <authorList>
            <person name="Kuroda M."/>
            <person name="Ohta T."/>
            <person name="Uchiyama I."/>
            <person name="Baba T."/>
            <person name="Yuzawa H."/>
            <person name="Kobayashi I."/>
            <person name="Cui L."/>
            <person name="Oguchi A."/>
            <person name="Aoki K."/>
            <person name="Nagai Y."/>
            <person name="Lian J.-Q."/>
            <person name="Ito T."/>
            <person name="Kanamori M."/>
            <person name="Matsumaru H."/>
            <person name="Maruyama A."/>
            <person name="Murakami H."/>
            <person name="Hosoyama A."/>
            <person name="Mizutani-Ui Y."/>
            <person name="Takahashi N.K."/>
            <person name="Sawano T."/>
            <person name="Inoue R."/>
            <person name="Kaito C."/>
            <person name="Sekimizu K."/>
            <person name="Hirakawa H."/>
            <person name="Kuhara S."/>
            <person name="Goto S."/>
            <person name="Yabuzaki J."/>
            <person name="Kanehisa M."/>
            <person name="Yamashita A."/>
            <person name="Oshima K."/>
            <person name="Furuya K."/>
            <person name="Yoshino C."/>
            <person name="Shiba T."/>
            <person name="Hattori M."/>
            <person name="Ogasawara N."/>
            <person name="Hayashi H."/>
            <person name="Hiramatsu K."/>
        </authorList>
    </citation>
    <scope>NUCLEOTIDE SEQUENCE [LARGE SCALE GENOMIC DNA]</scope>
    <source>
        <strain>Mu50 / ATCC 700699</strain>
    </source>
</reference>
<organism>
    <name type="scientific">Staphylococcus aureus (strain Mu50 / ATCC 700699)</name>
    <dbReference type="NCBI Taxonomy" id="158878"/>
    <lineage>
        <taxon>Bacteria</taxon>
        <taxon>Bacillati</taxon>
        <taxon>Bacillota</taxon>
        <taxon>Bacilli</taxon>
        <taxon>Bacillales</taxon>
        <taxon>Staphylococcaceae</taxon>
        <taxon>Staphylococcus</taxon>
    </lineage>
</organism>
<feature type="chain" id="PRO_0000286693" description="HTH-type transcriptional regulator SAV2578">
    <location>
        <begin position="1"/>
        <end position="185"/>
    </location>
</feature>
<feature type="domain" description="HTH tetR-type" evidence="1">
    <location>
        <begin position="6"/>
        <end position="66"/>
    </location>
</feature>
<feature type="DNA-binding region" description="H-T-H motif" evidence="1">
    <location>
        <begin position="29"/>
        <end position="48"/>
    </location>
</feature>
<name>Y2578_STAAM</name>
<keyword id="KW-0238">DNA-binding</keyword>
<keyword id="KW-0804">Transcription</keyword>
<keyword id="KW-0805">Transcription regulation</keyword>
<proteinExistence type="predicted"/>
<sequence>MRKDAKENRQRIEEIAHKLFDEEGVENISMNRIAKELGIGMGTLYRHFKDKSDLCYYVIQRDLDIFITHFKQIKDDYHSNYEVMQVSLDYLLQFKIDNKALLQCIEAGNNKLRFYQSAFYQELFDFYYDLFKSDDDTYTKFKTDMLLQSLSTSVFAFQIEHRHISIEAYRNYLLNIYLDEVERND</sequence>
<protein>
    <recommendedName>
        <fullName>HTH-type transcriptional regulator SAV2578</fullName>
    </recommendedName>
</protein>
<dbReference type="EMBL" id="BA000017">
    <property type="protein sequence ID" value="BAB58740.1"/>
    <property type="molecule type" value="Genomic_DNA"/>
</dbReference>
<dbReference type="RefSeq" id="WP_001224187.1">
    <property type="nucleotide sequence ID" value="NC_002758.2"/>
</dbReference>
<dbReference type="SMR" id="Q99R60"/>
<dbReference type="KEGG" id="sav:SAV2578"/>
<dbReference type="HOGENOM" id="CLU_069356_17_2_9"/>
<dbReference type="PhylomeDB" id="Q99R60"/>
<dbReference type="Proteomes" id="UP000002481">
    <property type="component" value="Chromosome"/>
</dbReference>
<dbReference type="GO" id="GO:0003677">
    <property type="term" value="F:DNA binding"/>
    <property type="evidence" value="ECO:0007669"/>
    <property type="project" value="UniProtKB-KW"/>
</dbReference>
<dbReference type="Gene3D" id="1.10.357.10">
    <property type="entry name" value="Tetracycline Repressor, domain 2"/>
    <property type="match status" value="1"/>
</dbReference>
<dbReference type="InterPro" id="IPR023772">
    <property type="entry name" value="DNA-bd_HTH_TetR-type_CS"/>
</dbReference>
<dbReference type="InterPro" id="IPR009057">
    <property type="entry name" value="Homeodomain-like_sf"/>
</dbReference>
<dbReference type="InterPro" id="IPR050624">
    <property type="entry name" value="HTH-type_Tx_Regulator"/>
</dbReference>
<dbReference type="InterPro" id="IPR001647">
    <property type="entry name" value="HTH_TetR"/>
</dbReference>
<dbReference type="PANTHER" id="PTHR43479">
    <property type="entry name" value="ACREF/ENVCD OPERON REPRESSOR-RELATED"/>
    <property type="match status" value="1"/>
</dbReference>
<dbReference type="PANTHER" id="PTHR43479:SF11">
    <property type="entry name" value="ACREF_ENVCD OPERON REPRESSOR-RELATED"/>
    <property type="match status" value="1"/>
</dbReference>
<dbReference type="Pfam" id="PF00440">
    <property type="entry name" value="TetR_N"/>
    <property type="match status" value="1"/>
</dbReference>
<dbReference type="PRINTS" id="PR00455">
    <property type="entry name" value="HTHTETR"/>
</dbReference>
<dbReference type="SUPFAM" id="SSF46689">
    <property type="entry name" value="Homeodomain-like"/>
    <property type="match status" value="1"/>
</dbReference>
<dbReference type="PROSITE" id="PS01081">
    <property type="entry name" value="HTH_TETR_1"/>
    <property type="match status" value="1"/>
</dbReference>
<dbReference type="PROSITE" id="PS50977">
    <property type="entry name" value="HTH_TETR_2"/>
    <property type="match status" value="1"/>
</dbReference>
<evidence type="ECO:0000255" key="1">
    <source>
        <dbReference type="PROSITE-ProRule" id="PRU00335"/>
    </source>
</evidence>